<dbReference type="EC" id="1.1.1.290" evidence="1"/>
<dbReference type="EMBL" id="CP000891">
    <property type="protein sequence ID" value="ABX50005.1"/>
    <property type="molecule type" value="Genomic_DNA"/>
</dbReference>
<dbReference type="RefSeq" id="WP_006085464.1">
    <property type="nucleotide sequence ID" value="NC_009997.1"/>
</dbReference>
<dbReference type="SMR" id="A9KTV0"/>
<dbReference type="KEGG" id="sbn:Sbal195_2839"/>
<dbReference type="HOGENOM" id="CLU_019796_4_0_6"/>
<dbReference type="UniPathway" id="UPA00244">
    <property type="reaction ID" value="UER00310"/>
</dbReference>
<dbReference type="Proteomes" id="UP000000770">
    <property type="component" value="Chromosome"/>
</dbReference>
<dbReference type="GO" id="GO:0005737">
    <property type="term" value="C:cytoplasm"/>
    <property type="evidence" value="ECO:0007669"/>
    <property type="project" value="UniProtKB-SubCell"/>
</dbReference>
<dbReference type="GO" id="GO:0033711">
    <property type="term" value="F:4-phosphoerythronate dehydrogenase activity"/>
    <property type="evidence" value="ECO:0007669"/>
    <property type="project" value="UniProtKB-EC"/>
</dbReference>
<dbReference type="GO" id="GO:0051287">
    <property type="term" value="F:NAD binding"/>
    <property type="evidence" value="ECO:0007669"/>
    <property type="project" value="InterPro"/>
</dbReference>
<dbReference type="GO" id="GO:0046983">
    <property type="term" value="F:protein dimerization activity"/>
    <property type="evidence" value="ECO:0007669"/>
    <property type="project" value="InterPro"/>
</dbReference>
<dbReference type="GO" id="GO:0008615">
    <property type="term" value="P:pyridoxine biosynthetic process"/>
    <property type="evidence" value="ECO:0007669"/>
    <property type="project" value="UniProtKB-UniRule"/>
</dbReference>
<dbReference type="CDD" id="cd12158">
    <property type="entry name" value="ErythrP_dh"/>
    <property type="match status" value="1"/>
</dbReference>
<dbReference type="FunFam" id="3.40.50.720:FF:000890">
    <property type="entry name" value="Erythronate-4-phosphate dehydrogenase"/>
    <property type="match status" value="1"/>
</dbReference>
<dbReference type="Gene3D" id="3.30.1370.170">
    <property type="match status" value="1"/>
</dbReference>
<dbReference type="Gene3D" id="3.40.50.720">
    <property type="entry name" value="NAD(P)-binding Rossmann-like Domain"/>
    <property type="match status" value="2"/>
</dbReference>
<dbReference type="HAMAP" id="MF_01825">
    <property type="entry name" value="PdxB"/>
    <property type="match status" value="1"/>
</dbReference>
<dbReference type="InterPro" id="IPR050418">
    <property type="entry name" value="D-iso_2-hydroxyacid_DH_PdxB"/>
</dbReference>
<dbReference type="InterPro" id="IPR006139">
    <property type="entry name" value="D-isomer_2_OHA_DH_cat_dom"/>
</dbReference>
<dbReference type="InterPro" id="IPR029753">
    <property type="entry name" value="D-isomer_DH_CS"/>
</dbReference>
<dbReference type="InterPro" id="IPR006140">
    <property type="entry name" value="D-isomer_DH_NAD-bd"/>
</dbReference>
<dbReference type="InterPro" id="IPR020921">
    <property type="entry name" value="Erythronate-4-P_DHase"/>
</dbReference>
<dbReference type="InterPro" id="IPR024531">
    <property type="entry name" value="Erythronate-4-P_DHase_dimer"/>
</dbReference>
<dbReference type="InterPro" id="IPR036291">
    <property type="entry name" value="NAD(P)-bd_dom_sf"/>
</dbReference>
<dbReference type="InterPro" id="IPR038251">
    <property type="entry name" value="PdxB_dimer_sf"/>
</dbReference>
<dbReference type="PANTHER" id="PTHR43761:SF1">
    <property type="entry name" value="D-ISOMER SPECIFIC 2-HYDROXYACID DEHYDROGENASE CATALYTIC DOMAIN-CONTAINING PROTEIN-RELATED"/>
    <property type="match status" value="1"/>
</dbReference>
<dbReference type="PANTHER" id="PTHR43761">
    <property type="entry name" value="D-ISOMER SPECIFIC 2-HYDROXYACID DEHYDROGENASE FAMILY PROTEIN (AFU_ORTHOLOGUE AFUA_1G13630)"/>
    <property type="match status" value="1"/>
</dbReference>
<dbReference type="Pfam" id="PF00389">
    <property type="entry name" value="2-Hacid_dh"/>
    <property type="match status" value="1"/>
</dbReference>
<dbReference type="Pfam" id="PF02826">
    <property type="entry name" value="2-Hacid_dh_C"/>
    <property type="match status" value="1"/>
</dbReference>
<dbReference type="Pfam" id="PF11890">
    <property type="entry name" value="DUF3410"/>
    <property type="match status" value="1"/>
</dbReference>
<dbReference type="SUPFAM" id="SSF52283">
    <property type="entry name" value="Formate/glycerate dehydrogenase catalytic domain-like"/>
    <property type="match status" value="1"/>
</dbReference>
<dbReference type="SUPFAM" id="SSF51735">
    <property type="entry name" value="NAD(P)-binding Rossmann-fold domains"/>
    <property type="match status" value="1"/>
</dbReference>
<dbReference type="PROSITE" id="PS00671">
    <property type="entry name" value="D_2_HYDROXYACID_DH_3"/>
    <property type="match status" value="1"/>
</dbReference>
<gene>
    <name evidence="1" type="primary">pdxB</name>
    <name type="ordered locus">Sbal195_2839</name>
</gene>
<sequence>MKILVDENMPYVEPLFGDLGDIIPVNGRTLTAEQVREADVLLVRSVTKVNAELLSGNNKLKFVGSATIGTDHVDLAYLAERNIPFSNAPGCNATAVGEFAFIAMLELAQRFNSPLKGKVVGIVGAGNTGTATAKCLQAYGIKVLLNDPIKAAEGDPRSFVSLETIMAQADIISLHVPITRTGEHKTKYLFDEARLKALKPNTWFVNCCRGDVIDNQALIKVKQQRDDLKLVLDVWEGEPTPLPELVPLAEFATPHIAGYSLEGKARGTFMLYQKLCQLLNITADKSLLDLLPSFNIKAVELATAPNEKALLQLARFVYDLRDDDKMFRNTFLNENGFDTMRKNHQHRREFSALALAYDGQSEVDWLSNLGFSGVGQ</sequence>
<name>PDXB_SHEB9</name>
<accession>A9KTV0</accession>
<proteinExistence type="inferred from homology"/>
<protein>
    <recommendedName>
        <fullName evidence="1">Erythronate-4-phosphate dehydrogenase</fullName>
        <ecNumber evidence="1">1.1.1.290</ecNumber>
    </recommendedName>
</protein>
<feature type="chain" id="PRO_1000088428" description="Erythronate-4-phosphate dehydrogenase">
    <location>
        <begin position="1"/>
        <end position="376"/>
    </location>
</feature>
<feature type="active site" evidence="1">
    <location>
        <position position="209"/>
    </location>
</feature>
<feature type="active site" evidence="1">
    <location>
        <position position="238"/>
    </location>
</feature>
<feature type="active site" description="Proton donor" evidence="1">
    <location>
        <position position="255"/>
    </location>
</feature>
<feature type="binding site" evidence="1">
    <location>
        <position position="45"/>
    </location>
    <ligand>
        <name>substrate</name>
    </ligand>
</feature>
<feature type="binding site" evidence="1">
    <location>
        <position position="67"/>
    </location>
    <ligand>
        <name>substrate</name>
    </ligand>
</feature>
<feature type="binding site" evidence="1">
    <location>
        <position position="147"/>
    </location>
    <ligand>
        <name>NAD(+)</name>
        <dbReference type="ChEBI" id="CHEBI:57540"/>
    </ligand>
</feature>
<feature type="binding site" evidence="1">
    <location>
        <position position="233"/>
    </location>
    <ligand>
        <name>NAD(+)</name>
        <dbReference type="ChEBI" id="CHEBI:57540"/>
    </ligand>
</feature>
<feature type="binding site" evidence="1">
    <location>
        <position position="258"/>
    </location>
    <ligand>
        <name>NAD(+)</name>
        <dbReference type="ChEBI" id="CHEBI:57540"/>
    </ligand>
</feature>
<feature type="binding site" evidence="1">
    <location>
        <position position="259"/>
    </location>
    <ligand>
        <name>substrate</name>
    </ligand>
</feature>
<comment type="function">
    <text evidence="1">Catalyzes the oxidation of erythronate-4-phosphate to 3-hydroxy-2-oxo-4-phosphonooxybutanoate.</text>
</comment>
<comment type="catalytic activity">
    <reaction evidence="1">
        <text>4-phospho-D-erythronate + NAD(+) = (R)-3-hydroxy-2-oxo-4-phosphooxybutanoate + NADH + H(+)</text>
        <dbReference type="Rhea" id="RHEA:18829"/>
        <dbReference type="ChEBI" id="CHEBI:15378"/>
        <dbReference type="ChEBI" id="CHEBI:57540"/>
        <dbReference type="ChEBI" id="CHEBI:57945"/>
        <dbReference type="ChEBI" id="CHEBI:58538"/>
        <dbReference type="ChEBI" id="CHEBI:58766"/>
        <dbReference type="EC" id="1.1.1.290"/>
    </reaction>
</comment>
<comment type="pathway">
    <text evidence="1">Cofactor biosynthesis; pyridoxine 5'-phosphate biosynthesis; pyridoxine 5'-phosphate from D-erythrose 4-phosphate: step 2/5.</text>
</comment>
<comment type="subunit">
    <text evidence="1">Homodimer.</text>
</comment>
<comment type="subcellular location">
    <subcellularLocation>
        <location evidence="1">Cytoplasm</location>
    </subcellularLocation>
</comment>
<comment type="similarity">
    <text evidence="1">Belongs to the D-isomer specific 2-hydroxyacid dehydrogenase family. PdxB subfamily.</text>
</comment>
<keyword id="KW-0963">Cytoplasm</keyword>
<keyword id="KW-0520">NAD</keyword>
<keyword id="KW-0560">Oxidoreductase</keyword>
<keyword id="KW-0664">Pyridoxine biosynthesis</keyword>
<evidence type="ECO:0000255" key="1">
    <source>
        <dbReference type="HAMAP-Rule" id="MF_01825"/>
    </source>
</evidence>
<organism>
    <name type="scientific">Shewanella baltica (strain OS195)</name>
    <dbReference type="NCBI Taxonomy" id="399599"/>
    <lineage>
        <taxon>Bacteria</taxon>
        <taxon>Pseudomonadati</taxon>
        <taxon>Pseudomonadota</taxon>
        <taxon>Gammaproteobacteria</taxon>
        <taxon>Alteromonadales</taxon>
        <taxon>Shewanellaceae</taxon>
        <taxon>Shewanella</taxon>
    </lineage>
</organism>
<reference key="1">
    <citation type="submission" date="2007-11" db="EMBL/GenBank/DDBJ databases">
        <title>Complete sequence of chromosome of Shewanella baltica OS195.</title>
        <authorList>
            <consortium name="US DOE Joint Genome Institute"/>
            <person name="Copeland A."/>
            <person name="Lucas S."/>
            <person name="Lapidus A."/>
            <person name="Barry K."/>
            <person name="Glavina del Rio T."/>
            <person name="Dalin E."/>
            <person name="Tice H."/>
            <person name="Pitluck S."/>
            <person name="Chain P."/>
            <person name="Malfatti S."/>
            <person name="Shin M."/>
            <person name="Vergez L."/>
            <person name="Schmutz J."/>
            <person name="Larimer F."/>
            <person name="Land M."/>
            <person name="Hauser L."/>
            <person name="Kyrpides N."/>
            <person name="Kim E."/>
            <person name="Brettar I."/>
            <person name="Rodrigues J."/>
            <person name="Konstantinidis K."/>
            <person name="Klappenbach J."/>
            <person name="Hofle M."/>
            <person name="Tiedje J."/>
            <person name="Richardson P."/>
        </authorList>
    </citation>
    <scope>NUCLEOTIDE SEQUENCE [LARGE SCALE GENOMIC DNA]</scope>
    <source>
        <strain>OS195</strain>
    </source>
</reference>